<evidence type="ECO:0000250" key="1">
    <source>
        <dbReference type="UniProtKB" id="Q13835"/>
    </source>
</evidence>
<evidence type="ECO:0000256" key="2">
    <source>
        <dbReference type="SAM" id="MobiDB-lite"/>
    </source>
</evidence>
<evidence type="ECO:0000269" key="3">
    <source>
    </source>
</evidence>
<evidence type="ECO:0000269" key="4">
    <source>
    </source>
</evidence>
<evidence type="ECO:0000269" key="5">
    <source>
    </source>
</evidence>
<evidence type="ECO:0000269" key="6">
    <source>
    </source>
</evidence>
<evidence type="ECO:0000269" key="7">
    <source>
    </source>
</evidence>
<evidence type="ECO:0000269" key="8">
    <source>
    </source>
</evidence>
<evidence type="ECO:0000269" key="9">
    <source>
    </source>
</evidence>
<evidence type="ECO:0000269" key="10">
    <source>
    </source>
</evidence>
<evidence type="ECO:0000305" key="11"/>
<evidence type="ECO:0007744" key="12">
    <source>
    </source>
</evidence>
<comment type="function">
    <text evidence="1 5 6 7 8 9 10">A component of desmosome cell-cell junctions which are required for positive regulation of cellular adhesion (PubMed:27033150, PubMed:29678907). Plays a role in desmosome protein expression regulation and localization to the desmosomal plaque, thereby maintaining cell sheet integrity and anchorage of desmosomes to intermediate filaments (PubMed:27033150, PubMed:29678907). Required for localization of DSG3 and YAP1 to the cell membrane in keratinocytes in response to mechanical strain, via the formation of an interaction complex composed of DSG3, YAP1, PKP1 and YWHAG (By similarity). Positively regulates differentiation of keratinocytes, potentially via promoting localization of DSG1 at desmosome cell junctions (PubMed:28507225). Required for calcium-independent development and maturation of desmosome plaques specifically at lateral cell-cell contacts in differentiating keratinocytes (PubMed:27375112). Plays a role in the maintenance of DSG3 protein abundance, DSG3 clustering and localization of these clusters to the cell membrane in keratinocytes (PubMed:30949721). May also promote keratinocyte proliferation and morphogenesis during postnatal development (PubMed:27033150). Required for tight junction inside-out transepidermal barrier function of the skin, and is thereby involved in neonatal survival possibly via maintenance of hydration levels (PubMed:27033150). Promotes Wnt-mediated proliferation and differentiation of ameloblasts, via facilitating TJP1/ZO-1 localization to tight junctions (PubMed:27015268). Binds single-stranded DNA (ssDNA), and may thereby play a role in sensing DNA damage and promoting cell survival (By similarity). Positively regulates cap-dependent translation and as a result cell proliferation, via recruitment of EIF4A1 to the initiation complex and promotion of EIF4A1 ATPase activity (By similarity). Regulates the mRNA stability and protein abundance of desmosome components PKP2, PKP3, DSC2 and DSP, potentially via its interaction with FXR1 (PubMed:27375112).</text>
</comment>
<comment type="subunit">
    <text evidence="1 3 5 9">Part of a complex that contains DSG3, PKP1, YAP1 and YWHAG; the complex is required for localization of DSG3 and YAP1 to the cell membrane in keratinocytes (By similarity). Interacts (via N-terminus) with KRT5/CK5, KRT8/CK8 (via rod domain), KRT15/CK15 and KRT18/CK18 (via rod domain) as part of intermediate filaments (By similarity). Interacts with VIM (via rod domain) (By similarity). Interacts with DSP (By similarity). Interacts with DES (PubMed:10852826). Interacts with FXR1; the interaction may facilitate the binding of PKP1 to PKP2, PKP3 and DSP mRNA (By similarity). Interacts (via N-terminus) with EIF4A1; the interaction promotes EIF4A1 recruitment to the cap-dependent translation complex and EIF4A1 ATPase activity (By similarity). Interacts with TJP1/ZO-1; the interaction facilitates TJP1/ZO-1 localization to the plasma membrane (PubMed:27015268). Interacts (when phosphorylated) with YWHAG; the interaction results in translocation of PKP1 to the cytoplasm and loss of intercellular adhesion in keratinocytes (PubMed:29678907).</text>
</comment>
<comment type="subcellular location">
    <subcellularLocation>
        <location evidence="5 7">Nucleus</location>
    </subcellularLocation>
    <subcellularLocation>
        <location evidence="1">Cytoplasm</location>
        <location evidence="1">Perinuclear region</location>
    </subcellularLocation>
    <subcellularLocation>
        <location evidence="5 6 7 9">Cytoplasm</location>
    </subcellularLocation>
    <subcellularLocation>
        <location evidence="6 7 9">Cell junction</location>
        <location evidence="6 7 9">Desmosome</location>
    </subcellularLocation>
    <subcellularLocation>
        <location evidence="5">Cell membrane</location>
    </subcellularLocation>
    <subcellularLocation>
        <location evidence="1">Cytoplasm</location>
        <location evidence="1">Stress granule</location>
    </subcellularLocation>
    <text evidence="1 5 7 9">Colocalizes with EIF4A1 in stress granules following arsenate or hydrogen peroxide treatment (By similarity). Localizes to nucleoli following DNA damage (By similarity). Located in the cytoplasm during early tooth development, however localizes to the cell membrane in ameloblasts during molar growth (PubMed:27015268). Ca(2+)-mediated localization to the cell membrane in dental epithelial cells is inhibited via WNT3A (PubMed:27015268). Initially localized to the cytoplasm however as keratinocyte differentiation proceeds becomes localized to cell junctions as early cell-cell contacts become linear as part of membrane sealing (PubMed:27375112). Localized to lateral cell contacts in colocalization with DSP as epithelial sheet formation completes (PubMed:27375112). Localizes to the cytoplasm when the phosphorylated form interacts with YWHAG (PubMed:29678907). Protein stability is increased and localizes to the cytoplasm when phosphorylated at the N-terminus by AKT2 (By similarity). The unphosphorylated form is preferentially localized to desmosomes (By similarity).</text>
</comment>
<comment type="tissue specificity">
    <text evidence="4 5 7 8">Expressed in undifferentiated keratinocytes of the epidermis at birth, expression increases as differentiation proceeds (at protein level) (PubMed:18079750, PubMed:27375112, PubMed:28507225). Expressed in the cervical loop during early tooth differentiation, expression is then present between ameloblasts, at ameloblast-ameloblast junctions and in the stratum intermedium during pre-secretory and secretory stages of tooth development (at protein level) (PubMed:27015268).</text>
</comment>
<comment type="developmental stage">
    <text evidence="5 6">Expressed in the tooth at 11 dpc with expression slowing increasing until birth, after birth expression increases dramatically until 1 week of age (PubMed:27015268). Expressed in the epithelium of the tooth bud at 13 dpc (at protein level) (PubMed:27015268). Abundantly expressed in the stellate reticulum cells with weaker expression still apparent in epithelial cells at 14 dpc (at protein level) (PubMed:27015268). Expressed in the stratum intermedium and inner dental epithelial cells at 16 dpc (at protein level) (PubMed:27015268). Expressed in ameloblasts at birth (at protein level) (PubMed:27015268). Expressed in keratinocytes from dorsal skin at birth (at protein level) (PubMed:27033150).</text>
</comment>
<comment type="induction">
    <text evidence="5">Induced by Ca(2+) in dental epithelial cells.</text>
</comment>
<comment type="PTM">
    <text evidence="1 8 9">Phosphorylated by AKT2; required for interaction with YWHAG and subsequent localization away from desmosomes to the cytoplasm (PubMed:29678907). Phosphorylation of Ser-119 by AKT2 promotes PKP1-driven cap-dependent mRNA translation and decreases intercellular adhesion, phosphorylation is promoted by insulin (By similarity). Phosphorylation by RIPK4 at the N-terminus is required for its role in differentiation of keratinocytes and DSG1 localization at cell junctions (PubMed:28507225).</text>
</comment>
<comment type="disruption phenotype">
    <text evidence="6 7 8 10">Knockout mice are born at the expected Mendelian rate at a lower birth weight and whiskers are absent (PubMed:27033150). In the hour following birth mice develop skin lesions in the absence of mechanical trauma, and die within 24 hours of birth, average lifespan is 12 hours (PubMed:27033150). Cell-cell separation is apparent in the epidermal granular layer (PubMed:27033150). Skin thickness is reduced in the paw, however normal on the dorsal side of the mice (PubMed:27033150). Reduced number and size of subcutaneous adipocytes in the dorsal epidermis (PubMed:27033150). Desmosome number is reduced by 90% and remaining desmosomes are 45% smaller in the epidermal suprabasal layers (PubMed:27033150). During epidermal keratinocyte differentiation Pkp3 localization at tricellular contacts is lost and instead it colocalizes with Dsp at lateral cell-cell contacts, however these cell contacts fail to mature during progression of differentiation (PubMed:27375112). Loss of Dsp1 localization to desmosome cell-cell junctions (PubMed:28507225). Decrease in expression of Dsp and Dsc2 in epidermal keratinocytes during differentiation (PubMed:27375112). Reduces overall protein abundance of Dsg3, but also reduces oligomerization of Dsg3 and localization of regularly shaped Dsg3 clusters at cell membranes in keratinocytes (PubMed:30949721). Desmosome ultrastructure shows a lack of the inner plaque structure, however keratin filament anchoring remains intact at the remaining desmosomes where filament bundling is reduced (PubMed:27033150). Increase in Pkp3 expression and localization to cell borders, Dsp is mislocalized to the cytoplasm, and expression levels of Jup, Dsg1 and Dsg2 are increased (PubMed:27033150). Decrease in expression of Dsc2 in the skin (PubMed:27033150). Increase in keratin family member expression, although overall epidermal differentiation is not perturbed (PubMed:27033150). Decrease in epithelial cell sheet integrity following mechanical stress, significant delay in establishing transepithelial electrical resistance and reduced proliferation rate (PubMed:27033150). Disrupted inside-out barrier shown by a significant increase in transepidermal water loss resulting in dehydration (PubMed:27033150). No overall differences in tight junction protein expression, however many tight junction proteins show delayed membrane recruitment and Zo1 and Ocln show abnormal discontinuous and diffuse cellular distribution respectively (PubMed:27033150).</text>
</comment>
<comment type="similarity">
    <text evidence="11">Belongs to the beta-catenin family.</text>
</comment>
<feature type="chain" id="PRO_0000064285" description="Plakophilin-1">
    <location>
        <begin position="1"/>
        <end position="728"/>
    </location>
</feature>
<feature type="repeat" description="ARM 1">
    <location>
        <begin position="244"/>
        <end position="275"/>
    </location>
</feature>
<feature type="repeat" description="ARM 2">
    <location>
        <begin position="276"/>
        <end position="317"/>
    </location>
</feature>
<feature type="repeat" description="ARM 3">
    <location>
        <begin position="318"/>
        <end position="360"/>
    </location>
</feature>
<feature type="repeat" description="ARM 4">
    <location>
        <begin position="361"/>
        <end position="412"/>
    </location>
</feature>
<feature type="repeat" description="ARM 5">
    <location>
        <begin position="413"/>
        <end position="443"/>
    </location>
</feature>
<feature type="repeat" description="ARM 6">
    <location>
        <begin position="505"/>
        <end position="536"/>
    </location>
</feature>
<feature type="repeat" description="ARM 7">
    <location>
        <begin position="537"/>
        <end position="583"/>
    </location>
</feature>
<feature type="repeat" description="ARM 8">
    <location>
        <begin position="584"/>
        <end position="629"/>
    </location>
</feature>
<feature type="repeat" description="ARM 9">
    <location>
        <begin position="630"/>
        <end position="694"/>
    </location>
</feature>
<feature type="region of interest" description="Required for interaction with EIF4A1" evidence="1">
    <location>
        <begin position="1"/>
        <end position="287"/>
    </location>
</feature>
<feature type="region of interest" description="Required for binding to single stranded DNA" evidence="1">
    <location>
        <begin position="1"/>
        <end position="235"/>
    </location>
</feature>
<feature type="region of interest" description="Disordered" evidence="2">
    <location>
        <begin position="48"/>
        <end position="69"/>
    </location>
</feature>
<feature type="region of interest" description="Phosphorylation in this region is required for cytoplasmic localization and protein stabilization" evidence="1">
    <location>
        <begin position="54"/>
        <end position="69"/>
    </location>
</feature>
<feature type="region of interest" description="Phosphorylation in this region is required for cytoplasmic localization and protein stabilization" evidence="1">
    <location>
        <begin position="117"/>
        <end position="192"/>
    </location>
</feature>
<feature type="region of interest" description="Required for WNT-mediated nuclear localization" evidence="5">
    <location>
        <begin position="161"/>
        <end position="270"/>
    </location>
</feature>
<feature type="modified residue" description="Phosphoserine; by RIPK4" evidence="8">
    <location>
        <position position="4"/>
    </location>
</feature>
<feature type="modified residue" description="Phosphoserine" evidence="1">
    <location>
        <position position="119"/>
    </location>
</feature>
<feature type="modified residue" description="Phosphoserine; by RIPK4" evidence="8">
    <location>
        <position position="120"/>
    </location>
</feature>
<feature type="modified residue" description="Phosphoserine" evidence="12">
    <location>
        <position position="122"/>
    </location>
</feature>
<feature type="modified residue" description="Phosphoserine; by RIPK4" evidence="8 12">
    <location>
        <position position="143"/>
    </location>
</feature>
<feature type="mutagenesis site" description="Abolishes phosphorylation by RIPK4." evidence="8">
    <original>S</original>
    <variation>A</variation>
    <location>
        <position position="4"/>
    </location>
</feature>
<feature type="mutagenesis site" description="Abolishes phosphorylation by RIPK4." evidence="8">
    <original>S</original>
    <variation>A</variation>
    <location>
        <position position="120"/>
    </location>
</feature>
<feature type="mutagenesis site" description="Abolishes phosphorylation by RIPK4." evidence="8">
    <original>S</original>
    <variation>A</variation>
    <location>
        <position position="143"/>
    </location>
</feature>
<reference key="1">
    <citation type="submission" date="1996-09" db="EMBL/GenBank/DDBJ databases">
        <authorList>
            <person name="Nimmrich V."/>
            <person name="Hunziker A.H."/>
            <person name="Franke W.W."/>
        </authorList>
    </citation>
    <scope>NUCLEOTIDE SEQUENCE [MRNA]</scope>
    <source>
        <strain>C57BL/6J</strain>
        <tissue>Skin</tissue>
    </source>
</reference>
<reference key="2">
    <citation type="journal article" date="2004" name="Genome Res.">
        <title>The status, quality, and expansion of the NIH full-length cDNA project: the Mammalian Gene Collection (MGC).</title>
        <authorList>
            <consortium name="The MGC Project Team"/>
        </authorList>
    </citation>
    <scope>NUCLEOTIDE SEQUENCE [LARGE SCALE MRNA]</scope>
    <source>
        <tissue>Testis</tissue>
    </source>
</reference>
<reference key="3">
    <citation type="journal article" date="2000" name="J. Cell Sci.">
        <title>Interaction of plakophilins with desmoplakin and intermediate filament proteins: an in vitro analysis.</title>
        <authorList>
            <person name="Hofmann I."/>
            <person name="Mertens C."/>
            <person name="Brettel M."/>
            <person name="Nimmrich V."/>
            <person name="Schnoelzer M."/>
            <person name="Herrmann H."/>
        </authorList>
    </citation>
    <scope>INTERACTION WITH DES</scope>
</reference>
<reference key="4">
    <citation type="journal article" date="2008" name="J. Invest. Dermatol.">
        <title>Plakophilin-3-deficient mice develop hair coat abnormalities and are prone to cutaneous inflammation.</title>
        <authorList>
            <person name="Sklyarova T."/>
            <person name="Bonne S."/>
            <person name="D'Hooge P."/>
            <person name="Denecker G."/>
            <person name="Goossens S."/>
            <person name="De Rycke R."/>
            <person name="Borgonie G."/>
            <person name="Boesl M."/>
            <person name="van Roy F."/>
            <person name="van Hengel J."/>
        </authorList>
    </citation>
    <scope>TISSUE SPECIFICITY</scope>
</reference>
<reference key="5">
    <citation type="journal article" date="2010" name="Cell">
        <title>A tissue-specific atlas of mouse protein phosphorylation and expression.</title>
        <authorList>
            <person name="Huttlin E.L."/>
            <person name="Jedrychowski M.P."/>
            <person name="Elias J.E."/>
            <person name="Goswami T."/>
            <person name="Rad R."/>
            <person name="Beausoleil S.A."/>
            <person name="Villen J."/>
            <person name="Haas W."/>
            <person name="Sowa M.E."/>
            <person name="Gygi S.P."/>
        </authorList>
    </citation>
    <scope>PHOSPHORYLATION [LARGE SCALE ANALYSIS] AT SER-122 AND SER-143</scope>
    <scope>IDENTIFICATION BY MASS SPECTROMETRY [LARGE SCALE ANALYSIS]</scope>
    <source>
        <tissue>Brown adipose tissue</tissue>
        <tissue>Liver</tissue>
        <tissue>Pancreas</tissue>
    </source>
</reference>
<reference key="6">
    <citation type="journal article" date="2016" name="J. Invest. Dermatol.">
        <title>Growth Retardation, Loss of Desmosomal Adhesion, and Impaired Tight Junction Function Identify a Unique Role of Plakophilin 1 In Vivo.</title>
        <authorList>
            <person name="Rietscher K."/>
            <person name="Wolf A."/>
            <person name="Hause G."/>
            <person name="Rother A."/>
            <person name="Keil R."/>
            <person name="Magin T.M."/>
            <person name="Glass M."/>
            <person name="Niessen C.M."/>
            <person name="Hatzfeld M."/>
        </authorList>
    </citation>
    <scope>FUNCTION</scope>
    <scope>SUBCELLULAR LOCATION</scope>
    <scope>DEVELOPMENTAL STAGE</scope>
    <scope>DISRUPTION PHENOTYPE</scope>
</reference>
<reference key="7">
    <citation type="journal article" date="2016" name="J. Invest. Dermatol.">
        <title>Antagonistic Regulation of Intercellular Cohesion by Plakophilins 1 and 3.</title>
        <authorList>
            <person name="Keil R."/>
            <person name="Rietscher K."/>
            <person name="Hatzfeld M."/>
        </authorList>
    </citation>
    <scope>FUNCTION</scope>
    <scope>SUBCELLULAR LOCATION</scope>
    <scope>TISSUE SPECIFICITY</scope>
    <scope>DISRUPTION PHENOTYPE</scope>
</reference>
<reference key="8">
    <citation type="journal article" date="2016" name="PLoS ONE">
        <title>Plakophilin-1, a Novel Wnt Signaling Regulator, Is Critical for Tooth Development and Ameloblast Differentiation.</title>
        <authorList>
            <person name="Miyazaki K."/>
            <person name="Yoshizaki K."/>
            <person name="Arai C."/>
            <person name="Yamada A."/>
            <person name="Saito K."/>
            <person name="Ishikawa M."/>
            <person name="Xue H."/>
            <person name="Funada K."/>
            <person name="Haruyama N."/>
            <person name="Yamada Y."/>
            <person name="Fukumoto S."/>
            <person name="Takahashi I."/>
        </authorList>
    </citation>
    <scope>FUNCTION</scope>
    <scope>INTERACTION WITH TJP1</scope>
    <scope>SUBCELLULAR LOCATION</scope>
    <scope>TISSUE SPECIFICITY</scope>
    <scope>DEVELOPMENTAL STAGE</scope>
    <scope>INDUCTION</scope>
</reference>
<reference key="9">
    <citation type="journal article" date="2017" name="EMBO J.">
        <title>Phosphorylation of Pkp1 by RIPK4 regulates epidermal differentiation and skin tumorigenesis.</title>
        <authorList>
            <person name="Lee P."/>
            <person name="Jiang S."/>
            <person name="Li Y."/>
            <person name="Yue J."/>
            <person name="Gou X."/>
            <person name="Chen S.Y."/>
            <person name="Zhao Y."/>
            <person name="Schober M."/>
            <person name="Tan M."/>
            <person name="Wu X."/>
        </authorList>
    </citation>
    <scope>FUNCTION</scope>
    <scope>TISSUE SPECIFICITY</scope>
    <scope>PHOSPHORYLATION AT SER-4; SER-120 AND SER-143</scope>
    <scope>DISRUPTION PHENOTYPE</scope>
    <scope>MUTAGENESIS OF SER-4; SER-120 AND SER-143</scope>
</reference>
<reference key="10">
    <citation type="journal article" date="2018" name="J. Cell Sci.">
        <title>14-3-3 proteins regulate desmosomal adhesion via plakophilins.</title>
        <authorList>
            <person name="Rietscher K."/>
            <person name="Keil R."/>
            <person name="Jordan A."/>
            <person name="Hatzfeld M."/>
        </authorList>
    </citation>
    <scope>FUNCTION</scope>
    <scope>INTERACTION WITH YWHAG</scope>
    <scope>SUBCELLULAR LOCATION</scope>
    <scope>PHOSPHORYLATION</scope>
</reference>
<reference key="11">
    <citation type="journal article" date="2019" name="Cell. Mol. Life Sci.">
        <title>Plakophilin 1 but not plakophilin 3 regulates desmoglein clustering.</title>
        <authorList>
            <person name="Fuchs M."/>
            <person name="Foresti M."/>
            <person name="Radeva M.Y."/>
            <person name="Kugelmann D."/>
            <person name="Keil R."/>
            <person name="Hatzfeld M."/>
            <person name="Spindler V."/>
            <person name="Waschke J."/>
            <person name="Vielmuth F."/>
        </authorList>
    </citation>
    <scope>FUNCTION</scope>
    <scope>DISRUPTION PHENOTYPE</scope>
</reference>
<name>PKP1_MOUSE</name>
<accession>P97350</accession>
<accession>B2RSX3</accession>
<proteinExistence type="evidence at protein level"/>
<keyword id="KW-0130">Cell adhesion</keyword>
<keyword id="KW-0965">Cell junction</keyword>
<keyword id="KW-1003">Cell membrane</keyword>
<keyword id="KW-0963">Cytoplasm</keyword>
<keyword id="KW-0238">DNA-binding</keyword>
<keyword id="KW-0472">Membrane</keyword>
<keyword id="KW-0539">Nucleus</keyword>
<keyword id="KW-0597">Phosphoprotein</keyword>
<keyword id="KW-1185">Reference proteome</keyword>
<keyword id="KW-0677">Repeat</keyword>
<keyword id="KW-0694">RNA-binding</keyword>
<protein>
    <recommendedName>
        <fullName>Plakophilin-1</fullName>
    </recommendedName>
</protein>
<organism>
    <name type="scientific">Mus musculus</name>
    <name type="common">Mouse</name>
    <dbReference type="NCBI Taxonomy" id="10090"/>
    <lineage>
        <taxon>Eukaryota</taxon>
        <taxon>Metazoa</taxon>
        <taxon>Chordata</taxon>
        <taxon>Craniata</taxon>
        <taxon>Vertebrata</taxon>
        <taxon>Euteleostomi</taxon>
        <taxon>Mammalia</taxon>
        <taxon>Eutheria</taxon>
        <taxon>Euarchontoglires</taxon>
        <taxon>Glires</taxon>
        <taxon>Rodentia</taxon>
        <taxon>Myomorpha</taxon>
        <taxon>Muroidea</taxon>
        <taxon>Muridae</taxon>
        <taxon>Murinae</taxon>
        <taxon>Mus</taxon>
        <taxon>Mus</taxon>
    </lineage>
</organism>
<dbReference type="EMBL" id="Y07941">
    <property type="protein sequence ID" value="CAA69240.1"/>
    <property type="molecule type" value="mRNA"/>
</dbReference>
<dbReference type="EMBL" id="BC139041">
    <property type="protein sequence ID" value="AAI39042.1"/>
    <property type="molecule type" value="mRNA"/>
</dbReference>
<dbReference type="EMBL" id="BC139042">
    <property type="protein sequence ID" value="AAI39043.1"/>
    <property type="molecule type" value="mRNA"/>
</dbReference>
<dbReference type="CCDS" id="CCDS15322.1"/>
<dbReference type="RefSeq" id="NP_001300630.1">
    <property type="nucleotide sequence ID" value="NM_001313701.1"/>
</dbReference>
<dbReference type="RefSeq" id="NP_062619.1">
    <property type="nucleotide sequence ID" value="NM_019645.3"/>
</dbReference>
<dbReference type="SMR" id="P97350"/>
<dbReference type="BioGRID" id="202212">
    <property type="interactions" value="19"/>
</dbReference>
<dbReference type="FunCoup" id="P97350">
    <property type="interactions" value="378"/>
</dbReference>
<dbReference type="IntAct" id="P97350">
    <property type="interactions" value="9"/>
</dbReference>
<dbReference type="MINT" id="P97350"/>
<dbReference type="STRING" id="10090.ENSMUSP00000027667"/>
<dbReference type="GlyGen" id="P97350">
    <property type="glycosylation" value="2 sites, 1 O-linked glycan (1 site)"/>
</dbReference>
<dbReference type="iPTMnet" id="P97350"/>
<dbReference type="PhosphoSitePlus" id="P97350"/>
<dbReference type="SwissPalm" id="P97350"/>
<dbReference type="PaxDb" id="10090-ENSMUSP00000027667"/>
<dbReference type="PeptideAtlas" id="P97350"/>
<dbReference type="ProteomicsDB" id="289441"/>
<dbReference type="Antibodypedia" id="20641">
    <property type="antibodies" value="211 antibodies from 20 providers"/>
</dbReference>
<dbReference type="DNASU" id="18772"/>
<dbReference type="Ensembl" id="ENSMUST00000027667.13">
    <property type="protein sequence ID" value="ENSMUSP00000027667.7"/>
    <property type="gene ID" value="ENSMUSG00000026413.13"/>
</dbReference>
<dbReference type="Ensembl" id="ENSMUST00000163260.8">
    <property type="protein sequence ID" value="ENSMUSP00000128418.2"/>
    <property type="gene ID" value="ENSMUSG00000026413.13"/>
</dbReference>
<dbReference type="GeneID" id="18772"/>
<dbReference type="KEGG" id="mmu:18772"/>
<dbReference type="UCSC" id="uc007cub.1">
    <property type="organism name" value="mouse"/>
</dbReference>
<dbReference type="AGR" id="MGI:1328359"/>
<dbReference type="CTD" id="5317"/>
<dbReference type="MGI" id="MGI:1328359">
    <property type="gene designation" value="Pkp1"/>
</dbReference>
<dbReference type="VEuPathDB" id="HostDB:ENSMUSG00000026413"/>
<dbReference type="eggNOG" id="KOG1048">
    <property type="taxonomic scope" value="Eukaryota"/>
</dbReference>
<dbReference type="GeneTree" id="ENSGT00940000156735"/>
<dbReference type="HOGENOM" id="CLU_009111_3_1_1"/>
<dbReference type="InParanoid" id="P97350"/>
<dbReference type="OMA" id="YGAMTIQ"/>
<dbReference type="OrthoDB" id="3245100at2759"/>
<dbReference type="PhylomeDB" id="P97350"/>
<dbReference type="TreeFam" id="TF321877"/>
<dbReference type="Reactome" id="R-MMU-351906">
    <property type="pathway name" value="Apoptotic cleavage of cell adhesion proteins"/>
</dbReference>
<dbReference type="Reactome" id="R-MMU-6798695">
    <property type="pathway name" value="Neutrophil degranulation"/>
</dbReference>
<dbReference type="Reactome" id="R-MMU-6805567">
    <property type="pathway name" value="Keratinization"/>
</dbReference>
<dbReference type="Reactome" id="R-MMU-6809371">
    <property type="pathway name" value="Formation of the cornified envelope"/>
</dbReference>
<dbReference type="BioGRID-ORCS" id="18772">
    <property type="hits" value="0 hits in 78 CRISPR screens"/>
</dbReference>
<dbReference type="ChiTaRS" id="Pkp1">
    <property type="organism name" value="mouse"/>
</dbReference>
<dbReference type="PRO" id="PR:P97350"/>
<dbReference type="Proteomes" id="UP000000589">
    <property type="component" value="Chromosome 1"/>
</dbReference>
<dbReference type="RNAct" id="P97350">
    <property type="molecule type" value="protein"/>
</dbReference>
<dbReference type="Bgee" id="ENSMUSG00000026413">
    <property type="expression patterns" value="Expressed in tail skin and 79 other cell types or tissues"/>
</dbReference>
<dbReference type="ExpressionAtlas" id="P97350">
    <property type="expression patterns" value="baseline and differential"/>
</dbReference>
<dbReference type="GO" id="GO:0001533">
    <property type="term" value="C:cornified envelope"/>
    <property type="evidence" value="ECO:0000314"/>
    <property type="project" value="MGI"/>
</dbReference>
<dbReference type="GO" id="GO:0005737">
    <property type="term" value="C:cytoplasm"/>
    <property type="evidence" value="ECO:0000314"/>
    <property type="project" value="UniProtKB"/>
</dbReference>
<dbReference type="GO" id="GO:0010494">
    <property type="term" value="C:cytoplasmic stress granule"/>
    <property type="evidence" value="ECO:0007669"/>
    <property type="project" value="UniProtKB-SubCell"/>
</dbReference>
<dbReference type="GO" id="GO:0030057">
    <property type="term" value="C:desmosome"/>
    <property type="evidence" value="ECO:0000314"/>
    <property type="project" value="UniProtKB"/>
</dbReference>
<dbReference type="GO" id="GO:0097165">
    <property type="term" value="C:nuclear stress granule"/>
    <property type="evidence" value="ECO:0000250"/>
    <property type="project" value="UniProtKB"/>
</dbReference>
<dbReference type="GO" id="GO:0005654">
    <property type="term" value="C:nucleoplasm"/>
    <property type="evidence" value="ECO:0007669"/>
    <property type="project" value="Ensembl"/>
</dbReference>
<dbReference type="GO" id="GO:0005634">
    <property type="term" value="C:nucleus"/>
    <property type="evidence" value="ECO:0000314"/>
    <property type="project" value="UniProtKB"/>
</dbReference>
<dbReference type="GO" id="GO:0048471">
    <property type="term" value="C:perinuclear region of cytoplasm"/>
    <property type="evidence" value="ECO:0000250"/>
    <property type="project" value="UniProtKB"/>
</dbReference>
<dbReference type="GO" id="GO:0005886">
    <property type="term" value="C:plasma membrane"/>
    <property type="evidence" value="ECO:0000314"/>
    <property type="project" value="UniProtKB"/>
</dbReference>
<dbReference type="GO" id="GO:0003677">
    <property type="term" value="F:DNA binding"/>
    <property type="evidence" value="ECO:0000250"/>
    <property type="project" value="UniProtKB"/>
</dbReference>
<dbReference type="GO" id="GO:0005521">
    <property type="term" value="F:lamin binding"/>
    <property type="evidence" value="ECO:0007669"/>
    <property type="project" value="Ensembl"/>
</dbReference>
<dbReference type="GO" id="GO:0003723">
    <property type="term" value="F:RNA binding"/>
    <property type="evidence" value="ECO:0007669"/>
    <property type="project" value="UniProtKB-KW"/>
</dbReference>
<dbReference type="GO" id="GO:0036305">
    <property type="term" value="P:ameloblast differentiation"/>
    <property type="evidence" value="ECO:0000315"/>
    <property type="project" value="UniProtKB"/>
</dbReference>
<dbReference type="GO" id="GO:0098609">
    <property type="term" value="P:cell-cell adhesion"/>
    <property type="evidence" value="ECO:0007669"/>
    <property type="project" value="InterPro"/>
</dbReference>
<dbReference type="GO" id="GO:0002159">
    <property type="term" value="P:desmosome assembly"/>
    <property type="evidence" value="ECO:0000315"/>
    <property type="project" value="UniProtKB"/>
</dbReference>
<dbReference type="GO" id="GO:0002160">
    <property type="term" value="P:desmosome maintenance"/>
    <property type="evidence" value="ECO:0000315"/>
    <property type="project" value="UniProtKB"/>
</dbReference>
<dbReference type="GO" id="GO:0045110">
    <property type="term" value="P:intermediate filament bundle assembly"/>
    <property type="evidence" value="ECO:0007669"/>
    <property type="project" value="Ensembl"/>
</dbReference>
<dbReference type="GO" id="GO:1902373">
    <property type="term" value="P:negative regulation of mRNA catabolic process"/>
    <property type="evidence" value="ECO:0007669"/>
    <property type="project" value="Ensembl"/>
</dbReference>
<dbReference type="GO" id="GO:1903676">
    <property type="term" value="P:positive regulation of cap-dependent translational initiation"/>
    <property type="evidence" value="ECO:0000250"/>
    <property type="project" value="UniProtKB"/>
</dbReference>
<dbReference type="GO" id="GO:0022409">
    <property type="term" value="P:positive regulation of cell-cell adhesion"/>
    <property type="evidence" value="ECO:0000315"/>
    <property type="project" value="UniProtKB"/>
</dbReference>
<dbReference type="GO" id="GO:0045618">
    <property type="term" value="P:positive regulation of keratinocyte differentiation"/>
    <property type="evidence" value="ECO:0000315"/>
    <property type="project" value="UniProtKB"/>
</dbReference>
<dbReference type="GO" id="GO:1905477">
    <property type="term" value="P:positive regulation of protein localization to membrane"/>
    <property type="evidence" value="ECO:0000315"/>
    <property type="project" value="UniProtKB"/>
</dbReference>
<dbReference type="GO" id="GO:1903078">
    <property type="term" value="P:positive regulation of protein localization to plasma membrane"/>
    <property type="evidence" value="ECO:0000315"/>
    <property type="project" value="UniProtKB"/>
</dbReference>
<dbReference type="GO" id="GO:0045944">
    <property type="term" value="P:positive regulation of transcription by RNA polymerase II"/>
    <property type="evidence" value="ECO:0000250"/>
    <property type="project" value="UniProtKB"/>
</dbReference>
<dbReference type="GO" id="GO:0035377">
    <property type="term" value="P:transepithelial water transport"/>
    <property type="evidence" value="ECO:0000315"/>
    <property type="project" value="UniProtKB"/>
</dbReference>
<dbReference type="FunFam" id="1.25.10.10:FF:000135">
    <property type="entry name" value="Plakophilin 1"/>
    <property type="match status" value="1"/>
</dbReference>
<dbReference type="Gene3D" id="1.25.10.10">
    <property type="entry name" value="Leucine-rich Repeat Variant"/>
    <property type="match status" value="1"/>
</dbReference>
<dbReference type="InterPro" id="IPR011989">
    <property type="entry name" value="ARM-like"/>
</dbReference>
<dbReference type="InterPro" id="IPR016024">
    <property type="entry name" value="ARM-type_fold"/>
</dbReference>
<dbReference type="InterPro" id="IPR000225">
    <property type="entry name" value="Armadillo"/>
</dbReference>
<dbReference type="InterPro" id="IPR028435">
    <property type="entry name" value="Plakophilin/d_Catenin"/>
</dbReference>
<dbReference type="PANTHER" id="PTHR10372:SF3">
    <property type="entry name" value="PLAKOPHILIN-1"/>
    <property type="match status" value="1"/>
</dbReference>
<dbReference type="PANTHER" id="PTHR10372">
    <property type="entry name" value="PLAKOPHILLIN-RELATED"/>
    <property type="match status" value="1"/>
</dbReference>
<dbReference type="Pfam" id="PF00514">
    <property type="entry name" value="Arm"/>
    <property type="match status" value="3"/>
</dbReference>
<dbReference type="SMART" id="SM00185">
    <property type="entry name" value="ARM"/>
    <property type="match status" value="7"/>
</dbReference>
<dbReference type="SUPFAM" id="SSF48371">
    <property type="entry name" value="ARM repeat"/>
    <property type="match status" value="1"/>
</dbReference>
<dbReference type="PROSITE" id="PS50176">
    <property type="entry name" value="ARM_REPEAT"/>
    <property type="match status" value="3"/>
</dbReference>
<gene>
    <name type="primary">Pkp1</name>
</gene>
<sequence>MNHSPLKTALAYECFQDQDNSTLALPSDQKMKTGTSGRQRVQEQVMMTVKRQKSKSSQSSTLSHSNRGSMYDGLADNYNNYGTTSRSSYFSKFQAGNGSWGYPIYNGTLKREPDNRRFSSYSQMENWSRHYPRGSCATPGAGSDICFMQKIKASRSEPDLYCDPRGTLRKGTLGSKGHKTTQNRCSFYSTCSGQKAVKKCPVRPPSCTSKQDPVYVPPISCNKDLSFGHSRASSKICSEDIECSGLTIPKAVQYLCSQDEKYQAIGAYYIQHTCFQDESAKQQVYQLGGICKLVDLLRSPNQNVQQAAAGALRNLVFRSTPNKLETRRQNGIREAVSLLRRSGSTEIQKQLTGLLWNLSSTDELKEELVADALPVLTDRVIIPFSGWCDGNSNMSREVVDPEVFFNATGCLRNLSSADAGRQTMRNYSGLIDSLMAYVQNCVAASRCDDKSVENCMCILHNLSYRLDAEVPTRYRQLEYNTRNAYTEKSSTGCFSNRGDKMMNNNYDCPLPEEETNPKGSSWLYHSDAIRTYLNLMGKSKKDATLEACAGALQNLTASKGLMSNGMSQLIGIKEKGLPQIARLLQSGNSDVVRSGASLLSNMSRHPVLHRVMGNQVFPEVTRLLTSHTGNTSNSEDILSSACYTVRNLMTSQPQMAKQYFSNSMLNNVFNLCRNTASSPKAAEAARLLLSDMWASKELQSVLRQQGFDRNMMGNIAGANNLRNFTSRF</sequence>